<dbReference type="EMBL" id="CP000560">
    <property type="protein sequence ID" value="ABS74639.1"/>
    <property type="molecule type" value="Genomic_DNA"/>
</dbReference>
<dbReference type="RefSeq" id="WP_003153123.1">
    <property type="nucleotide sequence ID" value="NC_009725.2"/>
</dbReference>
<dbReference type="SMR" id="A7Z6L3"/>
<dbReference type="GeneID" id="93081416"/>
<dbReference type="KEGG" id="bay:RBAM_022780"/>
<dbReference type="HOGENOM" id="CLU_074944_0_1_9"/>
<dbReference type="UniPathway" id="UPA00345"/>
<dbReference type="Proteomes" id="UP000001120">
    <property type="component" value="Chromosome"/>
</dbReference>
<dbReference type="GO" id="GO:0005737">
    <property type="term" value="C:cytoplasm"/>
    <property type="evidence" value="ECO:0007669"/>
    <property type="project" value="UniProtKB-SubCell"/>
</dbReference>
<dbReference type="GO" id="GO:0003746">
    <property type="term" value="F:translation elongation factor activity"/>
    <property type="evidence" value="ECO:0007669"/>
    <property type="project" value="UniProtKB-UniRule"/>
</dbReference>
<dbReference type="GO" id="GO:0043043">
    <property type="term" value="P:peptide biosynthetic process"/>
    <property type="evidence" value="ECO:0007669"/>
    <property type="project" value="InterPro"/>
</dbReference>
<dbReference type="CDD" id="cd04470">
    <property type="entry name" value="S1_EF-P_repeat_1"/>
    <property type="match status" value="1"/>
</dbReference>
<dbReference type="CDD" id="cd05794">
    <property type="entry name" value="S1_EF-P_repeat_2"/>
    <property type="match status" value="1"/>
</dbReference>
<dbReference type="FunFam" id="2.30.30.30:FF:000010">
    <property type="entry name" value="Elongation factor P"/>
    <property type="match status" value="1"/>
</dbReference>
<dbReference type="FunFam" id="2.40.50.140:FF:000004">
    <property type="entry name" value="Elongation factor P"/>
    <property type="match status" value="1"/>
</dbReference>
<dbReference type="FunFam" id="2.40.50.140:FF:000009">
    <property type="entry name" value="Elongation factor P"/>
    <property type="match status" value="1"/>
</dbReference>
<dbReference type="Gene3D" id="2.30.30.30">
    <property type="match status" value="1"/>
</dbReference>
<dbReference type="Gene3D" id="2.40.50.140">
    <property type="entry name" value="Nucleic acid-binding proteins"/>
    <property type="match status" value="2"/>
</dbReference>
<dbReference type="HAMAP" id="MF_00141">
    <property type="entry name" value="EF_P"/>
    <property type="match status" value="1"/>
</dbReference>
<dbReference type="InterPro" id="IPR015365">
    <property type="entry name" value="Elong-fact-P_C"/>
</dbReference>
<dbReference type="InterPro" id="IPR012340">
    <property type="entry name" value="NA-bd_OB-fold"/>
</dbReference>
<dbReference type="InterPro" id="IPR014722">
    <property type="entry name" value="Rib_uL2_dom2"/>
</dbReference>
<dbReference type="InterPro" id="IPR020599">
    <property type="entry name" value="Transl_elong_fac_P/YeiP"/>
</dbReference>
<dbReference type="InterPro" id="IPR013185">
    <property type="entry name" value="Transl_elong_KOW-like"/>
</dbReference>
<dbReference type="InterPro" id="IPR001059">
    <property type="entry name" value="Transl_elong_P/YeiP_cen"/>
</dbReference>
<dbReference type="InterPro" id="IPR013852">
    <property type="entry name" value="Transl_elong_P/YeiP_CS"/>
</dbReference>
<dbReference type="InterPro" id="IPR011768">
    <property type="entry name" value="Transl_elongation_fac_P"/>
</dbReference>
<dbReference type="InterPro" id="IPR008991">
    <property type="entry name" value="Translation_prot_SH3-like_sf"/>
</dbReference>
<dbReference type="NCBIfam" id="TIGR00038">
    <property type="entry name" value="efp"/>
    <property type="match status" value="1"/>
</dbReference>
<dbReference type="NCBIfam" id="NF001810">
    <property type="entry name" value="PRK00529.1"/>
    <property type="match status" value="1"/>
</dbReference>
<dbReference type="PANTHER" id="PTHR30053">
    <property type="entry name" value="ELONGATION FACTOR P"/>
    <property type="match status" value="1"/>
</dbReference>
<dbReference type="PANTHER" id="PTHR30053:SF12">
    <property type="entry name" value="ELONGATION FACTOR P (EF-P) FAMILY PROTEIN"/>
    <property type="match status" value="1"/>
</dbReference>
<dbReference type="Pfam" id="PF01132">
    <property type="entry name" value="EFP"/>
    <property type="match status" value="1"/>
</dbReference>
<dbReference type="Pfam" id="PF08207">
    <property type="entry name" value="EFP_N"/>
    <property type="match status" value="1"/>
</dbReference>
<dbReference type="Pfam" id="PF09285">
    <property type="entry name" value="Elong-fact-P_C"/>
    <property type="match status" value="1"/>
</dbReference>
<dbReference type="PIRSF" id="PIRSF005901">
    <property type="entry name" value="EF-P"/>
    <property type="match status" value="1"/>
</dbReference>
<dbReference type="SMART" id="SM01185">
    <property type="entry name" value="EFP"/>
    <property type="match status" value="1"/>
</dbReference>
<dbReference type="SMART" id="SM00841">
    <property type="entry name" value="Elong-fact-P_C"/>
    <property type="match status" value="1"/>
</dbReference>
<dbReference type="SUPFAM" id="SSF50249">
    <property type="entry name" value="Nucleic acid-binding proteins"/>
    <property type="match status" value="2"/>
</dbReference>
<dbReference type="SUPFAM" id="SSF50104">
    <property type="entry name" value="Translation proteins SH3-like domain"/>
    <property type="match status" value="1"/>
</dbReference>
<dbReference type="PROSITE" id="PS01275">
    <property type="entry name" value="EFP"/>
    <property type="match status" value="1"/>
</dbReference>
<gene>
    <name evidence="1" type="primary">efp</name>
    <name type="ordered locus">RBAM_022780</name>
</gene>
<name>EFP_BACVZ</name>
<reference key="1">
    <citation type="journal article" date="2007" name="Nat. Biotechnol.">
        <title>Comparative analysis of the complete genome sequence of the plant growth-promoting bacterium Bacillus amyloliquefaciens FZB42.</title>
        <authorList>
            <person name="Chen X.H."/>
            <person name="Koumoutsi A."/>
            <person name="Scholz R."/>
            <person name="Eisenreich A."/>
            <person name="Schneider K."/>
            <person name="Heinemeyer I."/>
            <person name="Morgenstern B."/>
            <person name="Voss B."/>
            <person name="Hess W.R."/>
            <person name="Reva O."/>
            <person name="Junge H."/>
            <person name="Voigt B."/>
            <person name="Jungblut P.R."/>
            <person name="Vater J."/>
            <person name="Suessmuth R."/>
            <person name="Liesegang H."/>
            <person name="Strittmatter A."/>
            <person name="Gottschalk G."/>
            <person name="Borriss R."/>
        </authorList>
    </citation>
    <scope>NUCLEOTIDE SEQUENCE [LARGE SCALE GENOMIC DNA]</scope>
    <source>
        <strain>DSM 23117 / BGSC 10A6 / LMG 26770 / FZB42</strain>
    </source>
</reference>
<feature type="chain" id="PRO_1000010681" description="Elongation factor P">
    <location>
        <begin position="1"/>
        <end position="185"/>
    </location>
</feature>
<comment type="function">
    <text evidence="1">Involved in peptide bond synthesis. Stimulates efficient translation and peptide-bond synthesis on native or reconstituted 70S ribosomes in vitro. Probably functions indirectly by altering the affinity of the ribosome for aminoacyl-tRNA, thus increasing their reactivity as acceptors for peptidyl transferase.</text>
</comment>
<comment type="pathway">
    <text evidence="1">Protein biosynthesis; polypeptide chain elongation.</text>
</comment>
<comment type="subcellular location">
    <subcellularLocation>
        <location evidence="1">Cytoplasm</location>
    </subcellularLocation>
</comment>
<comment type="similarity">
    <text evidence="1">Belongs to the elongation factor P family.</text>
</comment>
<accession>A7Z6L3</accession>
<organism>
    <name type="scientific">Bacillus velezensis (strain DSM 23117 / BGSC 10A6 / LMG 26770 / FZB42)</name>
    <name type="common">Bacillus amyloliquefaciens subsp. plantarum</name>
    <dbReference type="NCBI Taxonomy" id="326423"/>
    <lineage>
        <taxon>Bacteria</taxon>
        <taxon>Bacillati</taxon>
        <taxon>Bacillota</taxon>
        <taxon>Bacilli</taxon>
        <taxon>Bacillales</taxon>
        <taxon>Bacillaceae</taxon>
        <taxon>Bacillus</taxon>
        <taxon>Bacillus amyloliquefaciens group</taxon>
    </lineage>
</organism>
<proteinExistence type="inferred from homology"/>
<sequence length="185" mass="20538">MISVNDFRTGLTIEVDGGIWRVVDFQHVKPGKGAAFVRSKLRNLRTGAIQEKTFRAGEKVAKAQIETKTMQYLYANGDQHVFMDTSSYEQLELNENQIEEELKYLLENMSVHIMMYQSETLGIELPNTVELKVVETEPGIKGDTASGGTKPAKTETGLVVNVPFFVNEGDTLVVNTSDGSYVSRA</sequence>
<evidence type="ECO:0000255" key="1">
    <source>
        <dbReference type="HAMAP-Rule" id="MF_00141"/>
    </source>
</evidence>
<keyword id="KW-0963">Cytoplasm</keyword>
<keyword id="KW-0251">Elongation factor</keyword>
<keyword id="KW-0648">Protein biosynthesis</keyword>
<protein>
    <recommendedName>
        <fullName evidence="1">Elongation factor P</fullName>
        <shortName evidence="1">EF-P</shortName>
    </recommendedName>
</protein>